<proteinExistence type="evidence at protein level"/>
<organism>
    <name type="scientific">Escherichia coli (strain K12)</name>
    <dbReference type="NCBI Taxonomy" id="83333"/>
    <lineage>
        <taxon>Bacteria</taxon>
        <taxon>Pseudomonadati</taxon>
        <taxon>Pseudomonadota</taxon>
        <taxon>Gammaproteobacteria</taxon>
        <taxon>Enterobacterales</taxon>
        <taxon>Enterobacteriaceae</taxon>
        <taxon>Escherichia</taxon>
    </lineage>
</organism>
<dbReference type="EMBL" id="U00096">
    <property type="protein sequence ID" value="ABV59574.1"/>
    <property type="molecule type" value="Genomic_DNA"/>
</dbReference>
<dbReference type="RefSeq" id="WP_001406816.1">
    <property type="nucleotide sequence ID" value="NZ_STEB01000044.1"/>
</dbReference>
<dbReference type="RefSeq" id="YP_001491546.1">
    <property type="nucleotide sequence ID" value="NC_000913.3"/>
</dbReference>
<dbReference type="FunCoup" id="A8DYP9">
    <property type="interactions" value="4"/>
</dbReference>
<dbReference type="STRING" id="511145.b4637"/>
<dbReference type="PaxDb" id="511145-b4637"/>
<dbReference type="EnsemblBacteria" id="ABV59574">
    <property type="protein sequence ID" value="ABV59574"/>
    <property type="gene ID" value="b4637"/>
</dbReference>
<dbReference type="GeneID" id="5625562"/>
<dbReference type="GeneID" id="93776801"/>
<dbReference type="KEGG" id="eco:b4637"/>
<dbReference type="KEGG" id="ecoc:C3026_03400"/>
<dbReference type="PATRIC" id="fig|83333.103.peg.1454"/>
<dbReference type="InParanoid" id="A8DYP9"/>
<dbReference type="BioCyc" id="EcoCyc:MONOMER0-2801"/>
<dbReference type="PRO" id="PR:A8DYP9"/>
<dbReference type="Proteomes" id="UP000000625">
    <property type="component" value="Chromosome"/>
</dbReference>
<dbReference type="GO" id="GO:0006417">
    <property type="term" value="P:regulation of translation"/>
    <property type="evidence" value="ECO:0000314"/>
    <property type="project" value="EcoCyc"/>
</dbReference>
<dbReference type="NCBIfam" id="NF011344">
    <property type="entry name" value="PRK14761.1"/>
    <property type="match status" value="1"/>
</dbReference>
<name>LPFUR_ECOLI</name>
<keyword id="KW-0428">Leader peptide</keyword>
<keyword id="KW-1185">Reference proteome</keyword>
<protein>
    <recommendedName>
        <fullName>fur leader peptide</fullName>
    </recommendedName>
</protein>
<accession>A8DYP9</accession>
<gene>
    <name type="primary">uof</name>
    <name type="ordered locus">b4637</name>
</gene>
<evidence type="ECO:0000269" key="1">
    <source>
    </source>
</evidence>
<sequence length="28" mass="3109">MIRIISRANSVTSSNEVNRLVTGQIPHD</sequence>
<feature type="peptide" id="PRO_0000315217" description="fur leader peptide">
    <location>
        <begin position="1"/>
        <end position="28"/>
    </location>
</feature>
<comment type="function">
    <text evidence="1">Cotranscribed with fur, it is essential for fur translation. The fur ribosomal binding site (RBS) is occluded by the 5'-mRNA secondary structure, which is opened by uof translation.</text>
</comment>
<comment type="induction">
    <text evidence="1">By iron depletion. Repressed by the ncRNA ryhB.</text>
</comment>
<reference key="1">
    <citation type="journal article" date="1997" name="Science">
        <title>The complete genome sequence of Escherichia coli K-12.</title>
        <authorList>
            <person name="Blattner F.R."/>
            <person name="Plunkett G. III"/>
            <person name="Bloch C.A."/>
            <person name="Perna N.T."/>
            <person name="Burland V."/>
            <person name="Riley M."/>
            <person name="Collado-Vides J."/>
            <person name="Glasner J.D."/>
            <person name="Rode C.K."/>
            <person name="Mayhew G.F."/>
            <person name="Gregor J."/>
            <person name="Davis N.W."/>
            <person name="Kirkpatrick H.A."/>
            <person name="Goeden M.A."/>
            <person name="Rose D.J."/>
            <person name="Mau B."/>
            <person name="Shao Y."/>
        </authorList>
    </citation>
    <scope>NUCLEOTIDE SEQUENCE [LARGE SCALE GENOMIC DNA]</scope>
    <source>
        <strain>K12 / MG1655 / ATCC 47076</strain>
    </source>
</reference>
<reference key="2">
    <citation type="journal article" date="2007" name="EMBO J.">
        <title>Control of Fur synthesis by the non-coding RNA RyhB and iron-responsive decoding.</title>
        <authorList>
            <person name="Vecerek B."/>
            <person name="Moll I."/>
            <person name="Blaesi U."/>
        </authorList>
    </citation>
    <scope>FUNCTION IN TRANSLATION OF FUR</scope>
    <scope>INDUCTION</scope>
</reference>